<keyword id="KW-1185">Reference proteome</keyword>
<keyword id="KW-0694">RNA-binding</keyword>
<keyword id="KW-0346">Stress response</keyword>
<keyword id="KW-0843">Virulence</keyword>
<evidence type="ECO:0000255" key="1">
    <source>
        <dbReference type="HAMAP-Rule" id="MF_00436"/>
    </source>
</evidence>
<evidence type="ECO:0000255" key="2">
    <source>
        <dbReference type="PROSITE-ProRule" id="PRU01346"/>
    </source>
</evidence>
<evidence type="ECO:0000256" key="3">
    <source>
        <dbReference type="SAM" id="MobiDB-lite"/>
    </source>
</evidence>
<evidence type="ECO:0000269" key="4">
    <source>
    </source>
</evidence>
<gene>
    <name evidence="1" type="primary">hfq</name>
    <name type="ordered locus">VC_0347</name>
</gene>
<dbReference type="EMBL" id="AE003852">
    <property type="protein sequence ID" value="AAF93520.1"/>
    <property type="molecule type" value="Genomic_DNA"/>
</dbReference>
<dbReference type="PIR" id="C82334">
    <property type="entry name" value="C82334"/>
</dbReference>
<dbReference type="RefSeq" id="NP_230001.1">
    <property type="nucleotide sequence ID" value="NC_002505.1"/>
</dbReference>
<dbReference type="RefSeq" id="WP_001051872.1">
    <property type="nucleotide sequence ID" value="NZ_LT906614.1"/>
</dbReference>
<dbReference type="SMR" id="Q9KV11"/>
<dbReference type="STRING" id="243277.VC_0347"/>
<dbReference type="DNASU" id="2615060"/>
<dbReference type="EnsemblBacteria" id="AAF93520">
    <property type="protein sequence ID" value="AAF93520"/>
    <property type="gene ID" value="VC_0347"/>
</dbReference>
<dbReference type="GeneID" id="94014871"/>
<dbReference type="KEGG" id="vch:VC_0347"/>
<dbReference type="PATRIC" id="fig|243277.26.peg.324"/>
<dbReference type="eggNOG" id="COG1923">
    <property type="taxonomic scope" value="Bacteria"/>
</dbReference>
<dbReference type="HOGENOM" id="CLU_113688_2_2_6"/>
<dbReference type="PHI-base" id="PHI:704"/>
<dbReference type="Proteomes" id="UP000000584">
    <property type="component" value="Chromosome 1"/>
</dbReference>
<dbReference type="GO" id="GO:0005829">
    <property type="term" value="C:cytosol"/>
    <property type="evidence" value="ECO:0000318"/>
    <property type="project" value="GO_Central"/>
</dbReference>
<dbReference type="GO" id="GO:0003723">
    <property type="term" value="F:RNA binding"/>
    <property type="evidence" value="ECO:0000318"/>
    <property type="project" value="GO_Central"/>
</dbReference>
<dbReference type="GO" id="GO:0006355">
    <property type="term" value="P:regulation of DNA-templated transcription"/>
    <property type="evidence" value="ECO:0007669"/>
    <property type="project" value="InterPro"/>
</dbReference>
<dbReference type="GO" id="GO:0043487">
    <property type="term" value="P:regulation of RNA stability"/>
    <property type="evidence" value="ECO:0000318"/>
    <property type="project" value="GO_Central"/>
</dbReference>
<dbReference type="GO" id="GO:0045974">
    <property type="term" value="P:regulation of translation, ncRNA-mediated"/>
    <property type="evidence" value="ECO:0000318"/>
    <property type="project" value="GO_Central"/>
</dbReference>
<dbReference type="CDD" id="cd01716">
    <property type="entry name" value="Hfq"/>
    <property type="match status" value="1"/>
</dbReference>
<dbReference type="FunFam" id="2.30.30.100:FF:000001">
    <property type="entry name" value="RNA-binding protein Hfq"/>
    <property type="match status" value="1"/>
</dbReference>
<dbReference type="Gene3D" id="2.30.30.100">
    <property type="match status" value="1"/>
</dbReference>
<dbReference type="HAMAP" id="MF_00436">
    <property type="entry name" value="Hfq"/>
    <property type="match status" value="1"/>
</dbReference>
<dbReference type="InterPro" id="IPR005001">
    <property type="entry name" value="Hfq"/>
</dbReference>
<dbReference type="InterPro" id="IPR010920">
    <property type="entry name" value="LSM_dom_sf"/>
</dbReference>
<dbReference type="InterPro" id="IPR047575">
    <property type="entry name" value="Sm"/>
</dbReference>
<dbReference type="NCBIfam" id="TIGR02383">
    <property type="entry name" value="Hfq"/>
    <property type="match status" value="1"/>
</dbReference>
<dbReference type="NCBIfam" id="NF001602">
    <property type="entry name" value="PRK00395.1"/>
    <property type="match status" value="1"/>
</dbReference>
<dbReference type="PANTHER" id="PTHR34772">
    <property type="entry name" value="RNA-BINDING PROTEIN HFQ"/>
    <property type="match status" value="1"/>
</dbReference>
<dbReference type="PANTHER" id="PTHR34772:SF1">
    <property type="entry name" value="RNA-BINDING PROTEIN HFQ"/>
    <property type="match status" value="1"/>
</dbReference>
<dbReference type="Pfam" id="PF17209">
    <property type="entry name" value="Hfq"/>
    <property type="match status" value="1"/>
</dbReference>
<dbReference type="SUPFAM" id="SSF50182">
    <property type="entry name" value="Sm-like ribonucleoproteins"/>
    <property type="match status" value="1"/>
</dbReference>
<dbReference type="PROSITE" id="PS52002">
    <property type="entry name" value="SM"/>
    <property type="match status" value="1"/>
</dbReference>
<accession>Q9KV11</accession>
<name>HFQ_VIBCH</name>
<proteinExistence type="evidence at protein level"/>
<reference key="1">
    <citation type="journal article" date="2000" name="Nature">
        <title>DNA sequence of both chromosomes of the cholera pathogen Vibrio cholerae.</title>
        <authorList>
            <person name="Heidelberg J.F."/>
            <person name="Eisen J.A."/>
            <person name="Nelson W.C."/>
            <person name="Clayton R.A."/>
            <person name="Gwinn M.L."/>
            <person name="Dodson R.J."/>
            <person name="Haft D.H."/>
            <person name="Hickey E.K."/>
            <person name="Peterson J.D."/>
            <person name="Umayam L.A."/>
            <person name="Gill S.R."/>
            <person name="Nelson K.E."/>
            <person name="Read T.D."/>
            <person name="Tettelin H."/>
            <person name="Richardson D.L."/>
            <person name="Ermolaeva M.D."/>
            <person name="Vamathevan J.J."/>
            <person name="Bass S."/>
            <person name="Qin H."/>
            <person name="Dragoi I."/>
            <person name="Sellers P."/>
            <person name="McDonald L.A."/>
            <person name="Utterback T.R."/>
            <person name="Fleischmann R.D."/>
            <person name="Nierman W.C."/>
            <person name="White O."/>
            <person name="Salzberg S.L."/>
            <person name="Smith H.O."/>
            <person name="Colwell R.R."/>
            <person name="Mekalanos J.J."/>
            <person name="Venter J.C."/>
            <person name="Fraser C.M."/>
        </authorList>
    </citation>
    <scope>NUCLEOTIDE SEQUENCE [LARGE SCALE GENOMIC DNA]</scope>
    <source>
        <strain>ATCC 39315 / El Tor Inaba N16961</strain>
    </source>
</reference>
<reference key="2">
    <citation type="journal article" date="2004" name="Mol. Microbiol.">
        <title>Hfq is essential for Vibrio cholerae virulence and downregulates sigma expression.</title>
        <authorList>
            <person name="Ding Y."/>
            <person name="Davis B.M."/>
            <person name="Waldor M.K."/>
        </authorList>
    </citation>
    <scope>FUNCTION IN VIRULENCE</scope>
    <scope>DISRUPTION PHENOTYPE</scope>
    <source>
        <strain>ATCC 39315 / El Tor Inaba N16961</strain>
    </source>
</reference>
<organism>
    <name type="scientific">Vibrio cholerae serotype O1 (strain ATCC 39315 / El Tor Inaba N16961)</name>
    <dbReference type="NCBI Taxonomy" id="243277"/>
    <lineage>
        <taxon>Bacteria</taxon>
        <taxon>Pseudomonadati</taxon>
        <taxon>Pseudomonadota</taxon>
        <taxon>Gammaproteobacteria</taxon>
        <taxon>Vibrionales</taxon>
        <taxon>Vibrionaceae</taxon>
        <taxon>Vibrio</taxon>
    </lineage>
</organism>
<comment type="function">
    <text evidence="1 4">RNA chaperone that binds small regulatory RNA (sRNAs) and mRNAs to facilitate mRNA translational regulation in response to envelope stress, environmental stress and changes in metabolite concentrations. Also binds with high specificity to tRNAs (By similarity). Essential for virulence in the suckling mouse model of cholera pathogenesis.</text>
</comment>
<comment type="disruption phenotype">
    <text evidence="4">A hfq deletion mutant cannot colonize the murine small intestine despite retaining the ability to produce the colonization factor TCP. Deletion of hfq does not impair production of the sigma factor RpoS. Expression and activity of the sigma factor sigma-E are dramatically increased in the hfq mutant.</text>
</comment>
<comment type="similarity">
    <text evidence="1">Belongs to the Hfq family.</text>
</comment>
<feature type="chain" id="PRO_0000095666" description="RNA-binding protein Hfq">
    <location>
        <begin position="1"/>
        <end position="87"/>
    </location>
</feature>
<feature type="domain" description="Sm" evidence="2">
    <location>
        <begin position="9"/>
        <end position="68"/>
    </location>
</feature>
<feature type="region of interest" description="Disordered" evidence="3">
    <location>
        <begin position="65"/>
        <end position="87"/>
    </location>
</feature>
<feature type="compositionally biased region" description="Basic and acidic residues" evidence="3">
    <location>
        <begin position="71"/>
        <end position="87"/>
    </location>
</feature>
<protein>
    <recommendedName>
        <fullName evidence="1">RNA-binding protein Hfq</fullName>
    </recommendedName>
</protein>
<sequence>MAKGQSLQDPFLNALRRERIPVSIYLVNGIKLQGQIESFDQFVILLKNTVNQMVYKHAISTVVPARPVSHHSGDRPASDRPAEKSEE</sequence>